<reference key="1">
    <citation type="journal article" date="2007" name="Science">
        <title>Legumes symbioses: absence of nod genes in photosynthetic bradyrhizobia.</title>
        <authorList>
            <person name="Giraud E."/>
            <person name="Moulin L."/>
            <person name="Vallenet D."/>
            <person name="Barbe V."/>
            <person name="Cytryn E."/>
            <person name="Avarre J.-C."/>
            <person name="Jaubert M."/>
            <person name="Simon D."/>
            <person name="Cartieaux F."/>
            <person name="Prin Y."/>
            <person name="Bena G."/>
            <person name="Hannibal L."/>
            <person name="Fardoux J."/>
            <person name="Kojadinovic M."/>
            <person name="Vuillet L."/>
            <person name="Lajus A."/>
            <person name="Cruveiller S."/>
            <person name="Rouy Z."/>
            <person name="Mangenot S."/>
            <person name="Segurens B."/>
            <person name="Dossat C."/>
            <person name="Franck W.L."/>
            <person name="Chang W.-S."/>
            <person name="Saunders E."/>
            <person name="Bruce D."/>
            <person name="Richardson P."/>
            <person name="Normand P."/>
            <person name="Dreyfus B."/>
            <person name="Pignol D."/>
            <person name="Stacey G."/>
            <person name="Emerich D."/>
            <person name="Vermeglio A."/>
            <person name="Medigue C."/>
            <person name="Sadowsky M."/>
        </authorList>
    </citation>
    <scope>NUCLEOTIDE SEQUENCE [LARGE SCALE GENOMIC DNA]</scope>
    <source>
        <strain>BTAi1 / ATCC BAA-1182</strain>
    </source>
</reference>
<accession>A5EK18</accession>
<sequence length="543" mass="60231">MARYIFITGGVVSSLGKGLASAALGALLQARGYKVRLRKLDPYLNLDPGTMSPYQHGEVFVTDDGAETDLDLGHYERFTGRPATKADNITTGRIYQDILTKERRGDYLGATIQVVPHVTNAIKDFVLSGNDEYDFVLVEIGGTVGDIEGLPFFEAIRQLKNELPRDHAIYIHLTLLPYIPSAGELKTKPTQHSVKELRSIGIQPDILLCRTDREIPKEERRKLGLFCNVRESAVIEARDVDNIYAVPEAYHAAGLDDEVLAAFGIEPRVPPALASWHTINERVRNPEGDVTIAIVGKYTGMKDAYKSLIEALSHGGIANKVRVKLDWIESEVFENEDPAPFLEHVNGILVPGGFGQRGAEGKIRAAQFARERDVPYFGICFGMQMAVIEAARNLVGITEANSTEFGPTKEPLVGLMTEWLRGNELERRSQSGDLGGTMRLGAYPAMLKRGSRVSEVYGGATEISERHRHRYEVNTAYKDRLEQHGLKFSGLSPDGVLPEIVEYADHPWFIGVQFHPELKSRPFEPHPLFASFIQAAVVQSRLV</sequence>
<feature type="chain" id="PRO_1000139390" description="CTP synthase">
    <location>
        <begin position="1"/>
        <end position="543"/>
    </location>
</feature>
<feature type="domain" description="Glutamine amidotransferase type-1" evidence="1">
    <location>
        <begin position="291"/>
        <end position="542"/>
    </location>
</feature>
<feature type="region of interest" description="Amidoligase domain" evidence="1">
    <location>
        <begin position="1"/>
        <end position="265"/>
    </location>
</feature>
<feature type="active site" description="Nucleophile; for glutamine hydrolysis" evidence="1">
    <location>
        <position position="380"/>
    </location>
</feature>
<feature type="active site" evidence="1">
    <location>
        <position position="515"/>
    </location>
</feature>
<feature type="active site" evidence="1">
    <location>
        <position position="517"/>
    </location>
</feature>
<feature type="binding site" evidence="1">
    <location>
        <position position="13"/>
    </location>
    <ligand>
        <name>CTP</name>
        <dbReference type="ChEBI" id="CHEBI:37563"/>
        <note>allosteric inhibitor</note>
    </ligand>
</feature>
<feature type="binding site" evidence="1">
    <location>
        <position position="13"/>
    </location>
    <ligand>
        <name>UTP</name>
        <dbReference type="ChEBI" id="CHEBI:46398"/>
    </ligand>
</feature>
<feature type="binding site" evidence="1">
    <location>
        <begin position="14"/>
        <end position="19"/>
    </location>
    <ligand>
        <name>ATP</name>
        <dbReference type="ChEBI" id="CHEBI:30616"/>
    </ligand>
</feature>
<feature type="binding site" evidence="1">
    <location>
        <position position="54"/>
    </location>
    <ligand>
        <name>L-glutamine</name>
        <dbReference type="ChEBI" id="CHEBI:58359"/>
    </ligand>
</feature>
<feature type="binding site" evidence="1">
    <location>
        <position position="71"/>
    </location>
    <ligand>
        <name>ATP</name>
        <dbReference type="ChEBI" id="CHEBI:30616"/>
    </ligand>
</feature>
<feature type="binding site" evidence="1">
    <location>
        <position position="71"/>
    </location>
    <ligand>
        <name>Mg(2+)</name>
        <dbReference type="ChEBI" id="CHEBI:18420"/>
    </ligand>
</feature>
<feature type="binding site" evidence="1">
    <location>
        <position position="139"/>
    </location>
    <ligand>
        <name>Mg(2+)</name>
        <dbReference type="ChEBI" id="CHEBI:18420"/>
    </ligand>
</feature>
<feature type="binding site" evidence="1">
    <location>
        <begin position="146"/>
        <end position="148"/>
    </location>
    <ligand>
        <name>CTP</name>
        <dbReference type="ChEBI" id="CHEBI:37563"/>
        <note>allosteric inhibitor</note>
    </ligand>
</feature>
<feature type="binding site" evidence="1">
    <location>
        <begin position="186"/>
        <end position="191"/>
    </location>
    <ligand>
        <name>CTP</name>
        <dbReference type="ChEBI" id="CHEBI:37563"/>
        <note>allosteric inhibitor</note>
    </ligand>
</feature>
<feature type="binding site" evidence="1">
    <location>
        <begin position="186"/>
        <end position="191"/>
    </location>
    <ligand>
        <name>UTP</name>
        <dbReference type="ChEBI" id="CHEBI:46398"/>
    </ligand>
</feature>
<feature type="binding site" evidence="1">
    <location>
        <position position="222"/>
    </location>
    <ligand>
        <name>CTP</name>
        <dbReference type="ChEBI" id="CHEBI:37563"/>
        <note>allosteric inhibitor</note>
    </ligand>
</feature>
<feature type="binding site" evidence="1">
    <location>
        <position position="222"/>
    </location>
    <ligand>
        <name>UTP</name>
        <dbReference type="ChEBI" id="CHEBI:46398"/>
    </ligand>
</feature>
<feature type="binding site" evidence="1">
    <location>
        <begin position="238"/>
        <end position="240"/>
    </location>
    <ligand>
        <name>ATP</name>
        <dbReference type="ChEBI" id="CHEBI:30616"/>
    </ligand>
</feature>
<feature type="binding site" evidence="1">
    <location>
        <position position="353"/>
    </location>
    <ligand>
        <name>L-glutamine</name>
        <dbReference type="ChEBI" id="CHEBI:58359"/>
    </ligand>
</feature>
<feature type="binding site" evidence="1">
    <location>
        <begin position="381"/>
        <end position="384"/>
    </location>
    <ligand>
        <name>L-glutamine</name>
        <dbReference type="ChEBI" id="CHEBI:58359"/>
    </ligand>
</feature>
<feature type="binding site" evidence="1">
    <location>
        <position position="404"/>
    </location>
    <ligand>
        <name>L-glutamine</name>
        <dbReference type="ChEBI" id="CHEBI:58359"/>
    </ligand>
</feature>
<feature type="binding site" evidence="1">
    <location>
        <position position="470"/>
    </location>
    <ligand>
        <name>L-glutamine</name>
        <dbReference type="ChEBI" id="CHEBI:58359"/>
    </ligand>
</feature>
<comment type="function">
    <text evidence="1">Catalyzes the ATP-dependent amination of UTP to CTP with either L-glutamine or ammonia as the source of nitrogen. Regulates intracellular CTP levels through interactions with the four ribonucleotide triphosphates.</text>
</comment>
<comment type="catalytic activity">
    <reaction evidence="1">
        <text>UTP + L-glutamine + ATP + H2O = CTP + L-glutamate + ADP + phosphate + 2 H(+)</text>
        <dbReference type="Rhea" id="RHEA:26426"/>
        <dbReference type="ChEBI" id="CHEBI:15377"/>
        <dbReference type="ChEBI" id="CHEBI:15378"/>
        <dbReference type="ChEBI" id="CHEBI:29985"/>
        <dbReference type="ChEBI" id="CHEBI:30616"/>
        <dbReference type="ChEBI" id="CHEBI:37563"/>
        <dbReference type="ChEBI" id="CHEBI:43474"/>
        <dbReference type="ChEBI" id="CHEBI:46398"/>
        <dbReference type="ChEBI" id="CHEBI:58359"/>
        <dbReference type="ChEBI" id="CHEBI:456216"/>
        <dbReference type="EC" id="6.3.4.2"/>
    </reaction>
</comment>
<comment type="catalytic activity">
    <reaction evidence="1">
        <text>L-glutamine + H2O = L-glutamate + NH4(+)</text>
        <dbReference type="Rhea" id="RHEA:15889"/>
        <dbReference type="ChEBI" id="CHEBI:15377"/>
        <dbReference type="ChEBI" id="CHEBI:28938"/>
        <dbReference type="ChEBI" id="CHEBI:29985"/>
        <dbReference type="ChEBI" id="CHEBI:58359"/>
    </reaction>
</comment>
<comment type="catalytic activity">
    <reaction evidence="1">
        <text>UTP + NH4(+) + ATP = CTP + ADP + phosphate + 2 H(+)</text>
        <dbReference type="Rhea" id="RHEA:16597"/>
        <dbReference type="ChEBI" id="CHEBI:15378"/>
        <dbReference type="ChEBI" id="CHEBI:28938"/>
        <dbReference type="ChEBI" id="CHEBI:30616"/>
        <dbReference type="ChEBI" id="CHEBI:37563"/>
        <dbReference type="ChEBI" id="CHEBI:43474"/>
        <dbReference type="ChEBI" id="CHEBI:46398"/>
        <dbReference type="ChEBI" id="CHEBI:456216"/>
    </reaction>
</comment>
<comment type="activity regulation">
    <text evidence="1">Allosterically activated by GTP, when glutamine is the substrate; GTP has no effect on the reaction when ammonia is the substrate. The allosteric effector GTP functions by stabilizing the protein conformation that binds the tetrahedral intermediate(s) formed during glutamine hydrolysis. Inhibited by the product CTP, via allosteric rather than competitive inhibition.</text>
</comment>
<comment type="pathway">
    <text evidence="1">Pyrimidine metabolism; CTP biosynthesis via de novo pathway; CTP from UDP: step 2/2.</text>
</comment>
<comment type="subunit">
    <text evidence="1">Homotetramer.</text>
</comment>
<comment type="miscellaneous">
    <text evidence="1">CTPSs have evolved a hybrid strategy for distinguishing between UTP and CTP. The overlapping regions of the product feedback inhibitory and substrate sites recognize a common feature in both compounds, the triphosphate moiety. To differentiate isosteric substrate and product pyrimidine rings, an additional pocket far from the expected kinase/ligase catalytic site, specifically recognizes the cytosine and ribose portions of the product inhibitor.</text>
</comment>
<comment type="similarity">
    <text evidence="1">Belongs to the CTP synthase family.</text>
</comment>
<protein>
    <recommendedName>
        <fullName evidence="1">CTP synthase</fullName>
        <ecNumber evidence="1">6.3.4.2</ecNumber>
    </recommendedName>
    <alternativeName>
        <fullName evidence="1">Cytidine 5'-triphosphate synthase</fullName>
    </alternativeName>
    <alternativeName>
        <fullName evidence="1">Cytidine triphosphate synthetase</fullName>
        <shortName evidence="1">CTP synthetase</shortName>
        <shortName evidence="1">CTPS</shortName>
    </alternativeName>
    <alternativeName>
        <fullName evidence="1">UTP--ammonia ligase</fullName>
    </alternativeName>
</protein>
<evidence type="ECO:0000255" key="1">
    <source>
        <dbReference type="HAMAP-Rule" id="MF_01227"/>
    </source>
</evidence>
<proteinExistence type="inferred from homology"/>
<name>PYRG_BRASB</name>
<organism>
    <name type="scientific">Bradyrhizobium sp. (strain BTAi1 / ATCC BAA-1182)</name>
    <dbReference type="NCBI Taxonomy" id="288000"/>
    <lineage>
        <taxon>Bacteria</taxon>
        <taxon>Pseudomonadati</taxon>
        <taxon>Pseudomonadota</taxon>
        <taxon>Alphaproteobacteria</taxon>
        <taxon>Hyphomicrobiales</taxon>
        <taxon>Nitrobacteraceae</taxon>
        <taxon>Bradyrhizobium</taxon>
    </lineage>
</organism>
<keyword id="KW-0067">ATP-binding</keyword>
<keyword id="KW-0315">Glutamine amidotransferase</keyword>
<keyword id="KW-0436">Ligase</keyword>
<keyword id="KW-0460">Magnesium</keyword>
<keyword id="KW-0479">Metal-binding</keyword>
<keyword id="KW-0547">Nucleotide-binding</keyword>
<keyword id="KW-0665">Pyrimidine biosynthesis</keyword>
<keyword id="KW-1185">Reference proteome</keyword>
<dbReference type="EC" id="6.3.4.2" evidence="1"/>
<dbReference type="EMBL" id="CP000494">
    <property type="protein sequence ID" value="ABQ36512.1"/>
    <property type="molecule type" value="Genomic_DNA"/>
</dbReference>
<dbReference type="RefSeq" id="WP_012044508.1">
    <property type="nucleotide sequence ID" value="NC_009485.1"/>
</dbReference>
<dbReference type="SMR" id="A5EK18"/>
<dbReference type="STRING" id="288000.BBta_4476"/>
<dbReference type="KEGG" id="bbt:BBta_4476"/>
<dbReference type="eggNOG" id="COG0504">
    <property type="taxonomic scope" value="Bacteria"/>
</dbReference>
<dbReference type="HOGENOM" id="CLU_011675_5_0_5"/>
<dbReference type="OrthoDB" id="9801107at2"/>
<dbReference type="UniPathway" id="UPA00159">
    <property type="reaction ID" value="UER00277"/>
</dbReference>
<dbReference type="Proteomes" id="UP000000246">
    <property type="component" value="Chromosome"/>
</dbReference>
<dbReference type="GO" id="GO:0005829">
    <property type="term" value="C:cytosol"/>
    <property type="evidence" value="ECO:0007669"/>
    <property type="project" value="TreeGrafter"/>
</dbReference>
<dbReference type="GO" id="GO:0005524">
    <property type="term" value="F:ATP binding"/>
    <property type="evidence" value="ECO:0007669"/>
    <property type="project" value="UniProtKB-KW"/>
</dbReference>
<dbReference type="GO" id="GO:0003883">
    <property type="term" value="F:CTP synthase activity"/>
    <property type="evidence" value="ECO:0007669"/>
    <property type="project" value="UniProtKB-UniRule"/>
</dbReference>
<dbReference type="GO" id="GO:0004359">
    <property type="term" value="F:glutaminase activity"/>
    <property type="evidence" value="ECO:0007669"/>
    <property type="project" value="RHEA"/>
</dbReference>
<dbReference type="GO" id="GO:0042802">
    <property type="term" value="F:identical protein binding"/>
    <property type="evidence" value="ECO:0007669"/>
    <property type="project" value="TreeGrafter"/>
</dbReference>
<dbReference type="GO" id="GO:0046872">
    <property type="term" value="F:metal ion binding"/>
    <property type="evidence" value="ECO:0007669"/>
    <property type="project" value="UniProtKB-KW"/>
</dbReference>
<dbReference type="GO" id="GO:0044210">
    <property type="term" value="P:'de novo' CTP biosynthetic process"/>
    <property type="evidence" value="ECO:0007669"/>
    <property type="project" value="UniProtKB-UniRule"/>
</dbReference>
<dbReference type="GO" id="GO:0019856">
    <property type="term" value="P:pyrimidine nucleobase biosynthetic process"/>
    <property type="evidence" value="ECO:0007669"/>
    <property type="project" value="TreeGrafter"/>
</dbReference>
<dbReference type="CDD" id="cd03113">
    <property type="entry name" value="CTPS_N"/>
    <property type="match status" value="1"/>
</dbReference>
<dbReference type="CDD" id="cd01746">
    <property type="entry name" value="GATase1_CTP_Synthase"/>
    <property type="match status" value="1"/>
</dbReference>
<dbReference type="FunFam" id="3.40.50.300:FF:000009">
    <property type="entry name" value="CTP synthase"/>
    <property type="match status" value="1"/>
</dbReference>
<dbReference type="FunFam" id="3.40.50.880:FF:000002">
    <property type="entry name" value="CTP synthase"/>
    <property type="match status" value="1"/>
</dbReference>
<dbReference type="Gene3D" id="3.40.50.880">
    <property type="match status" value="1"/>
</dbReference>
<dbReference type="Gene3D" id="3.40.50.300">
    <property type="entry name" value="P-loop containing nucleotide triphosphate hydrolases"/>
    <property type="match status" value="1"/>
</dbReference>
<dbReference type="HAMAP" id="MF_01227">
    <property type="entry name" value="PyrG"/>
    <property type="match status" value="1"/>
</dbReference>
<dbReference type="InterPro" id="IPR029062">
    <property type="entry name" value="Class_I_gatase-like"/>
</dbReference>
<dbReference type="InterPro" id="IPR004468">
    <property type="entry name" value="CTP_synthase"/>
</dbReference>
<dbReference type="InterPro" id="IPR017456">
    <property type="entry name" value="CTP_synthase_N"/>
</dbReference>
<dbReference type="InterPro" id="IPR017926">
    <property type="entry name" value="GATASE"/>
</dbReference>
<dbReference type="InterPro" id="IPR033828">
    <property type="entry name" value="GATase1_CTP_Synthase"/>
</dbReference>
<dbReference type="InterPro" id="IPR027417">
    <property type="entry name" value="P-loop_NTPase"/>
</dbReference>
<dbReference type="NCBIfam" id="NF003792">
    <property type="entry name" value="PRK05380.1"/>
    <property type="match status" value="1"/>
</dbReference>
<dbReference type="NCBIfam" id="TIGR00337">
    <property type="entry name" value="PyrG"/>
    <property type="match status" value="1"/>
</dbReference>
<dbReference type="PANTHER" id="PTHR11550">
    <property type="entry name" value="CTP SYNTHASE"/>
    <property type="match status" value="1"/>
</dbReference>
<dbReference type="PANTHER" id="PTHR11550:SF0">
    <property type="entry name" value="CTP SYNTHASE-RELATED"/>
    <property type="match status" value="1"/>
</dbReference>
<dbReference type="Pfam" id="PF06418">
    <property type="entry name" value="CTP_synth_N"/>
    <property type="match status" value="1"/>
</dbReference>
<dbReference type="Pfam" id="PF00117">
    <property type="entry name" value="GATase"/>
    <property type="match status" value="1"/>
</dbReference>
<dbReference type="SUPFAM" id="SSF52317">
    <property type="entry name" value="Class I glutamine amidotransferase-like"/>
    <property type="match status" value="1"/>
</dbReference>
<dbReference type="SUPFAM" id="SSF52540">
    <property type="entry name" value="P-loop containing nucleoside triphosphate hydrolases"/>
    <property type="match status" value="1"/>
</dbReference>
<dbReference type="PROSITE" id="PS51273">
    <property type="entry name" value="GATASE_TYPE_1"/>
    <property type="match status" value="1"/>
</dbReference>
<gene>
    <name evidence="1" type="primary">pyrG</name>
    <name type="ordered locus">BBta_4476</name>
</gene>